<comment type="function">
    <text evidence="1">Endoplasmic reticulum disulfide reductase involved both in the correct folding of proteins and degradation of misfolded proteins. Required for efficient folding of proteins in the endoplasmic reticulum by catalyzing the removal of non-native disulfide bonds formed during the folding of proteins, such as LDLR. Also involved in endoplasmic reticulum-associated degradation (ERAD) by reducing incorrect disulfide bonds in misfolded glycoproteins recognized by EDEM1. Interaction with HSPA5 is required its activity, not for the disulfide reductase activity, but to facilitate the release of DNAJC10 from its substrate. Promotes apoptotic signaling pathway in response to endoplasmic reticulum stress (By similarity).</text>
</comment>
<comment type="subunit">
    <text evidence="1">Interacts with HSPA5 (via its J domain). Interacts with EDEM1 (By similarity).</text>
</comment>
<comment type="subcellular location">
    <subcellularLocation>
        <location evidence="5">Endoplasmic reticulum lumen</location>
    </subcellularLocation>
</comment>
<comment type="domain">
    <text evidence="1">Thioredoxin domains 3 and 4 are the primary reductase domains.</text>
</comment>
<comment type="domain">
    <text evidence="1">The thioredoxin-like regions Trxb 1 and 2 lack a redox-active CXXC motif.</text>
</comment>
<accession>Q498R3</accession>
<evidence type="ECO:0000250" key="1"/>
<evidence type="ECO:0000255" key="2"/>
<evidence type="ECO:0000255" key="3">
    <source>
        <dbReference type="PROSITE-ProRule" id="PRU00286"/>
    </source>
</evidence>
<evidence type="ECO:0000255" key="4">
    <source>
        <dbReference type="PROSITE-ProRule" id="PRU00691"/>
    </source>
</evidence>
<evidence type="ECO:0000255" key="5">
    <source>
        <dbReference type="PROSITE-ProRule" id="PRU10138"/>
    </source>
</evidence>
<proteinExistence type="evidence at transcript level"/>
<reference key="1">
    <citation type="journal article" date="2004" name="Nature">
        <title>Genome sequence of the Brown Norway rat yields insights into mammalian evolution.</title>
        <authorList>
            <person name="Gibbs R.A."/>
            <person name="Weinstock G.M."/>
            <person name="Metzker M.L."/>
            <person name="Muzny D.M."/>
            <person name="Sodergren E.J."/>
            <person name="Scherer S."/>
            <person name="Scott G."/>
            <person name="Steffen D."/>
            <person name="Worley K.C."/>
            <person name="Burch P.E."/>
            <person name="Okwuonu G."/>
            <person name="Hines S."/>
            <person name="Lewis L."/>
            <person name="Deramo C."/>
            <person name="Delgado O."/>
            <person name="Dugan-Rocha S."/>
            <person name="Miner G."/>
            <person name="Morgan M."/>
            <person name="Hawes A."/>
            <person name="Gill R."/>
            <person name="Holt R.A."/>
            <person name="Adams M.D."/>
            <person name="Amanatides P.G."/>
            <person name="Baden-Tillson H."/>
            <person name="Barnstead M."/>
            <person name="Chin S."/>
            <person name="Evans C.A."/>
            <person name="Ferriera S."/>
            <person name="Fosler C."/>
            <person name="Glodek A."/>
            <person name="Gu Z."/>
            <person name="Jennings D."/>
            <person name="Kraft C.L."/>
            <person name="Nguyen T."/>
            <person name="Pfannkoch C.M."/>
            <person name="Sitter C."/>
            <person name="Sutton G.G."/>
            <person name="Venter J.C."/>
            <person name="Woodage T."/>
            <person name="Smith D."/>
            <person name="Lee H.-M."/>
            <person name="Gustafson E."/>
            <person name="Cahill P."/>
            <person name="Kana A."/>
            <person name="Doucette-Stamm L."/>
            <person name="Weinstock K."/>
            <person name="Fechtel K."/>
            <person name="Weiss R.B."/>
            <person name="Dunn D.M."/>
            <person name="Green E.D."/>
            <person name="Blakesley R.W."/>
            <person name="Bouffard G.G."/>
            <person name="De Jong P.J."/>
            <person name="Osoegawa K."/>
            <person name="Zhu B."/>
            <person name="Marra M."/>
            <person name="Schein J."/>
            <person name="Bosdet I."/>
            <person name="Fjell C."/>
            <person name="Jones S."/>
            <person name="Krzywinski M."/>
            <person name="Mathewson C."/>
            <person name="Siddiqui A."/>
            <person name="Wye N."/>
            <person name="McPherson J."/>
            <person name="Zhao S."/>
            <person name="Fraser C.M."/>
            <person name="Shetty J."/>
            <person name="Shatsman S."/>
            <person name="Geer K."/>
            <person name="Chen Y."/>
            <person name="Abramzon S."/>
            <person name="Nierman W.C."/>
            <person name="Havlak P.H."/>
            <person name="Chen R."/>
            <person name="Durbin K.J."/>
            <person name="Egan A."/>
            <person name="Ren Y."/>
            <person name="Song X.-Z."/>
            <person name="Li B."/>
            <person name="Liu Y."/>
            <person name="Qin X."/>
            <person name="Cawley S."/>
            <person name="Cooney A.J."/>
            <person name="D'Souza L.M."/>
            <person name="Martin K."/>
            <person name="Wu J.Q."/>
            <person name="Gonzalez-Garay M.L."/>
            <person name="Jackson A.R."/>
            <person name="Kalafus K.J."/>
            <person name="McLeod M.P."/>
            <person name="Milosavljevic A."/>
            <person name="Virk D."/>
            <person name="Volkov A."/>
            <person name="Wheeler D.A."/>
            <person name="Zhang Z."/>
            <person name="Bailey J.A."/>
            <person name="Eichler E.E."/>
            <person name="Tuzun E."/>
            <person name="Birney E."/>
            <person name="Mongin E."/>
            <person name="Ureta-Vidal A."/>
            <person name="Woodwark C."/>
            <person name="Zdobnov E."/>
            <person name="Bork P."/>
            <person name="Suyama M."/>
            <person name="Torrents D."/>
            <person name="Alexandersson M."/>
            <person name="Trask B.J."/>
            <person name="Young J.M."/>
            <person name="Huang H."/>
            <person name="Wang H."/>
            <person name="Xing H."/>
            <person name="Daniels S."/>
            <person name="Gietzen D."/>
            <person name="Schmidt J."/>
            <person name="Stevens K."/>
            <person name="Vitt U."/>
            <person name="Wingrove J."/>
            <person name="Camara F."/>
            <person name="Mar Alba M."/>
            <person name="Abril J.F."/>
            <person name="Guigo R."/>
            <person name="Smit A."/>
            <person name="Dubchak I."/>
            <person name="Rubin E.M."/>
            <person name="Couronne O."/>
            <person name="Poliakov A."/>
            <person name="Huebner N."/>
            <person name="Ganten D."/>
            <person name="Goesele C."/>
            <person name="Hummel O."/>
            <person name="Kreitler T."/>
            <person name="Lee Y.-A."/>
            <person name="Monti J."/>
            <person name="Schulz H."/>
            <person name="Zimdahl H."/>
            <person name="Himmelbauer H."/>
            <person name="Lehrach H."/>
            <person name="Jacob H.J."/>
            <person name="Bromberg S."/>
            <person name="Gullings-Handley J."/>
            <person name="Jensen-Seaman M.I."/>
            <person name="Kwitek A.E."/>
            <person name="Lazar J."/>
            <person name="Pasko D."/>
            <person name="Tonellato P.J."/>
            <person name="Twigger S."/>
            <person name="Ponting C.P."/>
            <person name="Duarte J.M."/>
            <person name="Rice S."/>
            <person name="Goodstadt L."/>
            <person name="Beatson S.A."/>
            <person name="Emes R.D."/>
            <person name="Winter E.E."/>
            <person name="Webber C."/>
            <person name="Brandt P."/>
            <person name="Nyakatura G."/>
            <person name="Adetobi M."/>
            <person name="Chiaromonte F."/>
            <person name="Elnitski L."/>
            <person name="Eswara P."/>
            <person name="Hardison R.C."/>
            <person name="Hou M."/>
            <person name="Kolbe D."/>
            <person name="Makova K."/>
            <person name="Miller W."/>
            <person name="Nekrutenko A."/>
            <person name="Riemer C."/>
            <person name="Schwartz S."/>
            <person name="Taylor J."/>
            <person name="Yang S."/>
            <person name="Zhang Y."/>
            <person name="Lindpaintner K."/>
            <person name="Andrews T.D."/>
            <person name="Caccamo M."/>
            <person name="Clamp M."/>
            <person name="Clarke L."/>
            <person name="Curwen V."/>
            <person name="Durbin R.M."/>
            <person name="Eyras E."/>
            <person name="Searle S.M."/>
            <person name="Cooper G.M."/>
            <person name="Batzoglou S."/>
            <person name="Brudno M."/>
            <person name="Sidow A."/>
            <person name="Stone E.A."/>
            <person name="Payseur B.A."/>
            <person name="Bourque G."/>
            <person name="Lopez-Otin C."/>
            <person name="Puente X.S."/>
            <person name="Chakrabarti K."/>
            <person name="Chatterji S."/>
            <person name="Dewey C."/>
            <person name="Pachter L."/>
            <person name="Bray N."/>
            <person name="Yap V.B."/>
            <person name="Caspi A."/>
            <person name="Tesler G."/>
            <person name="Pevzner P.A."/>
            <person name="Haussler D."/>
            <person name="Roskin K.M."/>
            <person name="Baertsch R."/>
            <person name="Clawson H."/>
            <person name="Furey T.S."/>
            <person name="Hinrichs A.S."/>
            <person name="Karolchik D."/>
            <person name="Kent W.J."/>
            <person name="Rosenbloom K.R."/>
            <person name="Trumbower H."/>
            <person name="Weirauch M."/>
            <person name="Cooper D.N."/>
            <person name="Stenson P.D."/>
            <person name="Ma B."/>
            <person name="Brent M."/>
            <person name="Arumugam M."/>
            <person name="Shteynberg D."/>
            <person name="Copley R.R."/>
            <person name="Taylor M.S."/>
            <person name="Riethman H."/>
            <person name="Mudunuri U."/>
            <person name="Peterson J."/>
            <person name="Guyer M."/>
            <person name="Felsenfeld A."/>
            <person name="Old S."/>
            <person name="Mockrin S."/>
            <person name="Collins F.S."/>
        </authorList>
    </citation>
    <scope>NUCLEOTIDE SEQUENCE [LARGE SCALE GENOMIC DNA]</scope>
    <source>
        <strain>Brown Norway</strain>
    </source>
</reference>
<reference key="2">
    <citation type="journal article" date="2004" name="Genome Res.">
        <title>The status, quality, and expansion of the NIH full-length cDNA project: the Mammalian Gene Collection (MGC).</title>
        <authorList>
            <consortium name="The MGC Project Team"/>
        </authorList>
    </citation>
    <scope>NUCLEOTIDE SEQUENCE [LARGE SCALE MRNA] OF 262-793</scope>
    <source>
        <tissue>Spleen</tissue>
    </source>
</reference>
<keyword id="KW-1015">Disulfide bond</keyword>
<keyword id="KW-0256">Endoplasmic reticulum</keyword>
<keyword id="KW-0325">Glycoprotein</keyword>
<keyword id="KW-0560">Oxidoreductase</keyword>
<keyword id="KW-0676">Redox-active center</keyword>
<keyword id="KW-1185">Reference proteome</keyword>
<keyword id="KW-0677">Repeat</keyword>
<keyword id="KW-0732">Signal</keyword>
<organism>
    <name type="scientific">Rattus norvegicus</name>
    <name type="common">Rat</name>
    <dbReference type="NCBI Taxonomy" id="10116"/>
    <lineage>
        <taxon>Eukaryota</taxon>
        <taxon>Metazoa</taxon>
        <taxon>Chordata</taxon>
        <taxon>Craniata</taxon>
        <taxon>Vertebrata</taxon>
        <taxon>Euteleostomi</taxon>
        <taxon>Mammalia</taxon>
        <taxon>Eutheria</taxon>
        <taxon>Euarchontoglires</taxon>
        <taxon>Glires</taxon>
        <taxon>Rodentia</taxon>
        <taxon>Myomorpha</taxon>
        <taxon>Muroidea</taxon>
        <taxon>Muridae</taxon>
        <taxon>Murinae</taxon>
        <taxon>Rattus</taxon>
    </lineage>
</organism>
<sequence>MGVWLNRDEFIRDVKRISLCLLVLYVVIVVGTDQNFYSLLGVSKTASSREIRQAFKKLALKLHPDKNPNNPNAHGDFLKINRAYEVLKDEDLRKKYDKYGEKGLEDNQGGQYESWSYYRYDFGIYDDDPEIITLERREFDAAVNSGELWFVNFYSPGCSHCHDLAPTWREFAKEVDGLLRIGAVNCGDDRMLCRMKGVNSYPSLFIFRSGMAAVKYNGDRSKESLVSFAMQHVRTTVTELSTGNFVNAIETAFAAGIGWLITFCFKGEDCLTPQTRLRLSGMLDGLVNVGWVDCDTQDSLCKSLDATASTTAYFPPGATLNNKEKSSVLFLNSLDAKEIYMEIIHNLPDFELLSANKLEDRLAHHRWLVFFHFGKNENANDPELKKLKTLLKNEHIQVGRFDCSSAPGICSDLYVFQSCLAVFKGQGTKEYEIHHGKKILYDILAFAKESVNSHVTTLGPQNFPASDKEPWLVDFFAPWCPPCRALLPELRKASTLLYGQLKVGTLDCTIHEGLCNMYNIQAYPTTVVFNQSSVHEYEGHHSAEQILEFIEDLRNPSVVSLTPTTFNELVKQRKHDEVWMVDFYSPWCHPCQVLMPEWKRMARTLTGLINVGSVDCQQYHSFCTQENVQRYPEIRFYPQKSSRAYQYHSYNGWNRDAYSLRSWGLGFLPQASIDLTPQTFNEKVLQGKTHWVIDFYAPWCGPCQNFAPEFELLARMIKGKVKAGKVDCQAYPQTCQKAGIRAYPSVKLYLYERAKKSIWEEQINSRDAKTIAALIYGKLETFQSQVKRNKDEL</sequence>
<feature type="signal peptide" evidence="2">
    <location>
        <begin position="1"/>
        <end position="32"/>
    </location>
</feature>
<feature type="chain" id="PRO_0000281486" description="DnaJ homolog subfamily C member 10">
    <location>
        <begin position="33"/>
        <end position="793"/>
    </location>
</feature>
<feature type="domain" description="J" evidence="3">
    <location>
        <begin position="35"/>
        <end position="100"/>
    </location>
</feature>
<feature type="domain" description="Thioredoxin 1" evidence="4">
    <location>
        <begin position="130"/>
        <end position="232"/>
    </location>
</feature>
<feature type="domain" description="Thioredoxin 2" evidence="4">
    <location>
        <begin position="454"/>
        <end position="553"/>
    </location>
</feature>
<feature type="domain" description="Thioredoxin 3" evidence="4">
    <location>
        <begin position="557"/>
        <end position="665"/>
    </location>
</feature>
<feature type="domain" description="Thioredoxin 4" evidence="4">
    <location>
        <begin position="671"/>
        <end position="776"/>
    </location>
</feature>
<feature type="region of interest" description="Trxb 1">
    <location>
        <begin position="235"/>
        <end position="350"/>
    </location>
</feature>
<feature type="region of interest" description="Trxb 2">
    <location>
        <begin position="348"/>
        <end position="463"/>
    </location>
</feature>
<feature type="short sequence motif" description="Prevents secretion from ER" evidence="5">
    <location>
        <begin position="790"/>
        <end position="793"/>
    </location>
</feature>
<feature type="glycosylation site" description="N-linked (GlcNAc...) asparagine" evidence="2">
    <location>
        <position position="530"/>
    </location>
</feature>
<feature type="disulfide bond" description="Redox-active" evidence="4">
    <location>
        <begin position="158"/>
        <end position="161"/>
    </location>
</feature>
<feature type="disulfide bond" description="Redox-active" evidence="4">
    <location>
        <begin position="480"/>
        <end position="483"/>
    </location>
</feature>
<feature type="disulfide bond" description="Redox-active" evidence="4">
    <location>
        <begin position="588"/>
        <end position="591"/>
    </location>
</feature>
<feature type="disulfide bond" description="Redox-active" evidence="4">
    <location>
        <begin position="700"/>
        <end position="703"/>
    </location>
</feature>
<dbReference type="EC" id="1.8.4.-"/>
<dbReference type="EMBL" id="AABR03024291">
    <property type="status" value="NOT_ANNOTATED_CDS"/>
    <property type="molecule type" value="Genomic_DNA"/>
</dbReference>
<dbReference type="EMBL" id="BC100105">
    <property type="protein sequence ID" value="AAI00106.1"/>
    <property type="molecule type" value="mRNA"/>
</dbReference>
<dbReference type="RefSeq" id="NP_001099956.2">
    <property type="nucleotide sequence ID" value="NM_001106486.2"/>
</dbReference>
<dbReference type="SMR" id="Q498R3"/>
<dbReference type="BioGRID" id="255075">
    <property type="interactions" value="1"/>
</dbReference>
<dbReference type="FunCoup" id="Q498R3">
    <property type="interactions" value="3338"/>
</dbReference>
<dbReference type="IntAct" id="Q498R3">
    <property type="interactions" value="7"/>
</dbReference>
<dbReference type="STRING" id="10116.ENSRNOP00000009839"/>
<dbReference type="GlyCosmos" id="Q498R3">
    <property type="glycosylation" value="1 site, No reported glycans"/>
</dbReference>
<dbReference type="GlyGen" id="Q498R3">
    <property type="glycosylation" value="1 site"/>
</dbReference>
<dbReference type="iPTMnet" id="Q498R3"/>
<dbReference type="PhosphoSitePlus" id="Q498R3"/>
<dbReference type="jPOST" id="Q498R3"/>
<dbReference type="PaxDb" id="10116-ENSRNOP00000009839"/>
<dbReference type="Ensembl" id="ENSRNOT00000009839.5">
    <property type="protein sequence ID" value="ENSRNOP00000009839.4"/>
    <property type="gene ID" value="ENSRNOG00000006803.6"/>
</dbReference>
<dbReference type="GeneID" id="295690"/>
<dbReference type="KEGG" id="rno:295690"/>
<dbReference type="UCSC" id="RGD:1307813">
    <property type="organism name" value="rat"/>
</dbReference>
<dbReference type="AGR" id="RGD:1307813"/>
<dbReference type="CTD" id="54431"/>
<dbReference type="RGD" id="1307813">
    <property type="gene designation" value="Dnajc10"/>
</dbReference>
<dbReference type="eggNOG" id="KOG0191">
    <property type="taxonomic scope" value="Eukaryota"/>
</dbReference>
<dbReference type="eggNOG" id="KOG0713">
    <property type="taxonomic scope" value="Eukaryota"/>
</dbReference>
<dbReference type="GeneTree" id="ENSGT00940000155558"/>
<dbReference type="HOGENOM" id="CLU_023279_0_0_1"/>
<dbReference type="InParanoid" id="Q498R3"/>
<dbReference type="OMA" id="APTWRKF"/>
<dbReference type="OrthoDB" id="5810603at2759"/>
<dbReference type="PhylomeDB" id="Q498R3"/>
<dbReference type="TreeFam" id="TF105169"/>
<dbReference type="PRO" id="PR:Q498R3"/>
<dbReference type="Proteomes" id="UP000002494">
    <property type="component" value="Chromosome 3"/>
</dbReference>
<dbReference type="Bgee" id="ENSRNOG00000006803">
    <property type="expression patterns" value="Expressed in Ammon's horn and 20 other cell types or tissues"/>
</dbReference>
<dbReference type="GO" id="GO:0005783">
    <property type="term" value="C:endoplasmic reticulum"/>
    <property type="evidence" value="ECO:0000266"/>
    <property type="project" value="RGD"/>
</dbReference>
<dbReference type="GO" id="GO:0034663">
    <property type="term" value="C:endoplasmic reticulum chaperone complex"/>
    <property type="evidence" value="ECO:0000266"/>
    <property type="project" value="RGD"/>
</dbReference>
<dbReference type="GO" id="GO:0005788">
    <property type="term" value="C:endoplasmic reticulum lumen"/>
    <property type="evidence" value="ECO:0000250"/>
    <property type="project" value="UniProtKB"/>
</dbReference>
<dbReference type="GO" id="GO:0001671">
    <property type="term" value="F:ATPase activator activity"/>
    <property type="evidence" value="ECO:0000266"/>
    <property type="project" value="RGD"/>
</dbReference>
<dbReference type="GO" id="GO:0051117">
    <property type="term" value="F:ATPase binding"/>
    <property type="evidence" value="ECO:0000266"/>
    <property type="project" value="RGD"/>
</dbReference>
<dbReference type="GO" id="GO:0015036">
    <property type="term" value="F:disulfide oxidoreductase activity"/>
    <property type="evidence" value="ECO:0000266"/>
    <property type="project" value="RGD"/>
</dbReference>
<dbReference type="GO" id="GO:0030544">
    <property type="term" value="F:Hsp70 protein binding"/>
    <property type="evidence" value="ECO:0000266"/>
    <property type="project" value="RGD"/>
</dbReference>
<dbReference type="GO" id="GO:0051787">
    <property type="term" value="F:misfolded protein binding"/>
    <property type="evidence" value="ECO:0000266"/>
    <property type="project" value="RGD"/>
</dbReference>
<dbReference type="GO" id="GO:0016671">
    <property type="term" value="F:oxidoreductase activity, acting on a sulfur group of donors, disulfide as acceptor"/>
    <property type="evidence" value="ECO:0000250"/>
    <property type="project" value="UniProtKB"/>
</dbReference>
<dbReference type="GO" id="GO:0015035">
    <property type="term" value="F:protein-disulfide reductase activity"/>
    <property type="evidence" value="ECO:0000250"/>
    <property type="project" value="UniProtKB"/>
</dbReference>
<dbReference type="GO" id="GO:0051087">
    <property type="term" value="F:protein-folding chaperone binding"/>
    <property type="evidence" value="ECO:0000266"/>
    <property type="project" value="RGD"/>
</dbReference>
<dbReference type="GO" id="GO:0036503">
    <property type="term" value="P:ERAD pathway"/>
    <property type="evidence" value="ECO:0000250"/>
    <property type="project" value="UniProtKB"/>
</dbReference>
<dbReference type="GO" id="GO:0070059">
    <property type="term" value="P:intrinsic apoptotic signaling pathway in response to endoplasmic reticulum stress"/>
    <property type="evidence" value="ECO:0000266"/>
    <property type="project" value="RGD"/>
</dbReference>
<dbReference type="GO" id="GO:0036498">
    <property type="term" value="P:IRE1-mediated unfolded protein response"/>
    <property type="evidence" value="ECO:0000318"/>
    <property type="project" value="GO_Central"/>
</dbReference>
<dbReference type="GO" id="GO:0034975">
    <property type="term" value="P:protein folding in endoplasmic reticulum"/>
    <property type="evidence" value="ECO:0000250"/>
    <property type="project" value="UniProtKB"/>
</dbReference>
<dbReference type="GO" id="GO:0034976">
    <property type="term" value="P:response to endoplasmic reticulum stress"/>
    <property type="evidence" value="ECO:0000266"/>
    <property type="project" value="RGD"/>
</dbReference>
<dbReference type="CDD" id="cd06257">
    <property type="entry name" value="DnaJ"/>
    <property type="match status" value="1"/>
</dbReference>
<dbReference type="CDD" id="cd03004">
    <property type="entry name" value="PDI_a_ERdj5_C"/>
    <property type="match status" value="3"/>
</dbReference>
<dbReference type="CDD" id="cd03003">
    <property type="entry name" value="PDI_a_ERdj5_N"/>
    <property type="match status" value="1"/>
</dbReference>
<dbReference type="FunFam" id="1.10.287.110:FF:000029">
    <property type="entry name" value="DnaJ homolog subfamily C member 10"/>
    <property type="match status" value="1"/>
</dbReference>
<dbReference type="FunFam" id="3.40.30.10:FF:000087">
    <property type="entry name" value="DnaJ homolog subfamily C member 10"/>
    <property type="match status" value="1"/>
</dbReference>
<dbReference type="FunFam" id="3.40.30.10:FF:000106">
    <property type="entry name" value="DnaJ homolog subfamily C member 10"/>
    <property type="match status" value="1"/>
</dbReference>
<dbReference type="FunFam" id="3.40.30.10:FF:000125">
    <property type="entry name" value="DnaJ homolog subfamily C member 10"/>
    <property type="match status" value="1"/>
</dbReference>
<dbReference type="FunFam" id="3.40.30.10:FF:000135">
    <property type="entry name" value="DnaJ homolog subfamily C member 10"/>
    <property type="match status" value="1"/>
</dbReference>
<dbReference type="FunFam" id="3.40.30.10:FF:000137">
    <property type="entry name" value="DnaJ homolog subfamily C member 10"/>
    <property type="match status" value="1"/>
</dbReference>
<dbReference type="FunFam" id="3.40.30.10:FF:000169">
    <property type="entry name" value="DnaJ homolog subfamily C member 10"/>
    <property type="match status" value="1"/>
</dbReference>
<dbReference type="Gene3D" id="1.10.287.110">
    <property type="entry name" value="DnaJ domain"/>
    <property type="match status" value="1"/>
</dbReference>
<dbReference type="Gene3D" id="3.40.30.10">
    <property type="entry name" value="Glutaredoxin"/>
    <property type="match status" value="6"/>
</dbReference>
<dbReference type="InterPro" id="IPR001623">
    <property type="entry name" value="DnaJ_domain"/>
</dbReference>
<dbReference type="InterPro" id="IPR052460">
    <property type="entry name" value="ER_disulfide_reductase"/>
</dbReference>
<dbReference type="InterPro" id="IPR021170">
    <property type="entry name" value="ERdj5"/>
</dbReference>
<dbReference type="InterPro" id="IPR035674">
    <property type="entry name" value="ERdj5_TRX_C"/>
</dbReference>
<dbReference type="InterPro" id="IPR035673">
    <property type="entry name" value="ERdj5_TRX_N"/>
</dbReference>
<dbReference type="InterPro" id="IPR036869">
    <property type="entry name" value="J_dom_sf"/>
</dbReference>
<dbReference type="InterPro" id="IPR036249">
    <property type="entry name" value="Thioredoxin-like_sf"/>
</dbReference>
<dbReference type="InterPro" id="IPR017937">
    <property type="entry name" value="Thioredoxin_CS"/>
</dbReference>
<dbReference type="InterPro" id="IPR013766">
    <property type="entry name" value="Thioredoxin_domain"/>
</dbReference>
<dbReference type="PANTHER" id="PTHR44340">
    <property type="entry name" value="DNAJ HOMOLOG SUBFAMILY C MEMBER 10"/>
    <property type="match status" value="1"/>
</dbReference>
<dbReference type="PANTHER" id="PTHR44340:SF1">
    <property type="entry name" value="DNAJ HOMOLOG SUBFAMILY C MEMBER 10"/>
    <property type="match status" value="1"/>
</dbReference>
<dbReference type="Pfam" id="PF00226">
    <property type="entry name" value="DnaJ"/>
    <property type="match status" value="1"/>
</dbReference>
<dbReference type="Pfam" id="PF00085">
    <property type="entry name" value="Thioredoxin"/>
    <property type="match status" value="4"/>
</dbReference>
<dbReference type="PIRSF" id="PIRSF037293">
    <property type="entry name" value="DnaJ_homolog_subfam-C"/>
    <property type="match status" value="1"/>
</dbReference>
<dbReference type="PRINTS" id="PR00625">
    <property type="entry name" value="JDOMAIN"/>
</dbReference>
<dbReference type="SMART" id="SM00271">
    <property type="entry name" value="DnaJ"/>
    <property type="match status" value="1"/>
</dbReference>
<dbReference type="SUPFAM" id="SSF46565">
    <property type="entry name" value="Chaperone J-domain"/>
    <property type="match status" value="1"/>
</dbReference>
<dbReference type="SUPFAM" id="SSF52833">
    <property type="entry name" value="Thioredoxin-like"/>
    <property type="match status" value="6"/>
</dbReference>
<dbReference type="PROSITE" id="PS50076">
    <property type="entry name" value="DNAJ_2"/>
    <property type="match status" value="1"/>
</dbReference>
<dbReference type="PROSITE" id="PS00014">
    <property type="entry name" value="ER_TARGET"/>
    <property type="match status" value="1"/>
</dbReference>
<dbReference type="PROSITE" id="PS00194">
    <property type="entry name" value="THIOREDOXIN_1"/>
    <property type="match status" value="2"/>
</dbReference>
<dbReference type="PROSITE" id="PS51352">
    <property type="entry name" value="THIOREDOXIN_2"/>
    <property type="match status" value="3"/>
</dbReference>
<gene>
    <name type="primary">Dnajc10</name>
</gene>
<name>DJC10_RAT</name>
<protein>
    <recommendedName>
        <fullName>DnaJ homolog subfamily C member 10</fullName>
        <ecNumber>1.8.4.-</ecNumber>
    </recommendedName>
</protein>